<organism>
    <name type="scientific">Escherichia coli O6:K15:H31 (strain 536 / UPEC)</name>
    <dbReference type="NCBI Taxonomy" id="362663"/>
    <lineage>
        <taxon>Bacteria</taxon>
        <taxon>Pseudomonadati</taxon>
        <taxon>Pseudomonadota</taxon>
        <taxon>Gammaproteobacteria</taxon>
        <taxon>Enterobacterales</taxon>
        <taxon>Enterobacteriaceae</taxon>
        <taxon>Escherichia</taxon>
    </lineage>
</organism>
<reference key="1">
    <citation type="journal article" date="2006" name="Mol. Microbiol.">
        <title>Role of pathogenicity island-associated integrases in the genome plasticity of uropathogenic Escherichia coli strain 536.</title>
        <authorList>
            <person name="Hochhut B."/>
            <person name="Wilde C."/>
            <person name="Balling G."/>
            <person name="Middendorf B."/>
            <person name="Dobrindt U."/>
            <person name="Brzuszkiewicz E."/>
            <person name="Gottschalk G."/>
            <person name="Carniel E."/>
            <person name="Hacker J."/>
        </authorList>
    </citation>
    <scope>NUCLEOTIDE SEQUENCE [LARGE SCALE GENOMIC DNA]</scope>
    <source>
        <strain>536 / UPEC</strain>
    </source>
</reference>
<keyword id="KW-0285">Flavoprotein</keyword>
<keyword id="KW-0288">FMN</keyword>
<keyword id="KW-0520">NAD</keyword>
<keyword id="KW-0521">NADP</keyword>
<keyword id="KW-0560">Oxidoreductase</keyword>
<protein>
    <recommendedName>
        <fullName evidence="1">Probable malonic semialdehyde reductase RutE</fullName>
        <ecNumber evidence="1">1.1.1.298</ecNumber>
    </recommendedName>
</protein>
<evidence type="ECO:0000255" key="1">
    <source>
        <dbReference type="HAMAP-Rule" id="MF_01204"/>
    </source>
</evidence>
<comment type="function">
    <text evidence="1">May reduce toxic product malonic semialdehyde to 3-hydroxypropionic acid, which is excreted.</text>
</comment>
<comment type="catalytic activity">
    <reaction evidence="1">
        <text>3-hydroxypropanoate + NADP(+) = 3-oxopropanoate + NADPH + H(+)</text>
        <dbReference type="Rhea" id="RHEA:26438"/>
        <dbReference type="ChEBI" id="CHEBI:15378"/>
        <dbReference type="ChEBI" id="CHEBI:16510"/>
        <dbReference type="ChEBI" id="CHEBI:33190"/>
        <dbReference type="ChEBI" id="CHEBI:57783"/>
        <dbReference type="ChEBI" id="CHEBI:58349"/>
        <dbReference type="EC" id="1.1.1.298"/>
    </reaction>
</comment>
<comment type="cofactor">
    <cofactor evidence="1">
        <name>FMN</name>
        <dbReference type="ChEBI" id="CHEBI:58210"/>
    </cofactor>
</comment>
<comment type="induction">
    <text evidence="1">Up-regulated by the nitrogen regulatory protein C (NtrC also called GlnG) and repressed by RutR.</text>
</comment>
<comment type="similarity">
    <text evidence="1">Belongs to the nitroreductase family. HadB/RutE subfamily.</text>
</comment>
<feature type="chain" id="PRO_1000066137" description="Probable malonic semialdehyde reductase RutE">
    <location>
        <begin position="1"/>
        <end position="196"/>
    </location>
</feature>
<dbReference type="EC" id="1.1.1.298" evidence="1"/>
<dbReference type="EMBL" id="CP000247">
    <property type="protein sequence ID" value="ABG69020.1"/>
    <property type="molecule type" value="Genomic_DNA"/>
</dbReference>
<dbReference type="RefSeq" id="WP_001001164.1">
    <property type="nucleotide sequence ID" value="NC_008253.1"/>
</dbReference>
<dbReference type="SMR" id="Q0TJ59"/>
<dbReference type="KEGG" id="ecp:ECP_1007"/>
<dbReference type="HOGENOM" id="CLU_084441_0_0_6"/>
<dbReference type="Proteomes" id="UP000009182">
    <property type="component" value="Chromosome"/>
</dbReference>
<dbReference type="GO" id="GO:0035527">
    <property type="term" value="F:3-hydroxypropionate dehydrogenase (NADP+) activity"/>
    <property type="evidence" value="ECO:0007669"/>
    <property type="project" value="UniProtKB-UniRule"/>
</dbReference>
<dbReference type="GO" id="GO:0019740">
    <property type="term" value="P:nitrogen utilization"/>
    <property type="evidence" value="ECO:0007669"/>
    <property type="project" value="UniProtKB-UniRule"/>
</dbReference>
<dbReference type="GO" id="GO:0006212">
    <property type="term" value="P:uracil catabolic process"/>
    <property type="evidence" value="ECO:0007669"/>
    <property type="project" value="UniProtKB-UniRule"/>
</dbReference>
<dbReference type="CDD" id="cd02148">
    <property type="entry name" value="RutE-like"/>
    <property type="match status" value="1"/>
</dbReference>
<dbReference type="FunFam" id="3.40.109.10:FF:000003">
    <property type="entry name" value="Probable malonic semialdehyde reductase RutE"/>
    <property type="match status" value="1"/>
</dbReference>
<dbReference type="Gene3D" id="3.40.109.10">
    <property type="entry name" value="NADH Oxidase"/>
    <property type="match status" value="1"/>
</dbReference>
<dbReference type="HAMAP" id="MF_01204">
    <property type="entry name" value="Oxidoreductase_RutE_HadB"/>
    <property type="match status" value="1"/>
</dbReference>
<dbReference type="InterPro" id="IPR029479">
    <property type="entry name" value="Nitroreductase"/>
</dbReference>
<dbReference type="InterPro" id="IPR000415">
    <property type="entry name" value="Nitroreductase-like"/>
</dbReference>
<dbReference type="InterPro" id="IPR050461">
    <property type="entry name" value="Nitroreductase_HadB/RutE"/>
</dbReference>
<dbReference type="InterPro" id="IPR023936">
    <property type="entry name" value="RutE-like"/>
</dbReference>
<dbReference type="NCBIfam" id="NF003768">
    <property type="entry name" value="PRK05365.1"/>
    <property type="match status" value="1"/>
</dbReference>
<dbReference type="PANTHER" id="PTHR43543">
    <property type="entry name" value="MALONIC SEMIALDEHYDE REDUCTASE RUTE-RELATED"/>
    <property type="match status" value="1"/>
</dbReference>
<dbReference type="PANTHER" id="PTHR43543:SF1">
    <property type="entry name" value="MALONIC SEMIALDEHYDE REDUCTASE RUTE-RELATED"/>
    <property type="match status" value="1"/>
</dbReference>
<dbReference type="Pfam" id="PF00881">
    <property type="entry name" value="Nitroreductase"/>
    <property type="match status" value="1"/>
</dbReference>
<dbReference type="SUPFAM" id="SSF55469">
    <property type="entry name" value="FMN-dependent nitroreductase-like"/>
    <property type="match status" value="1"/>
</dbReference>
<gene>
    <name evidence="1" type="primary">rutE</name>
    <name type="ordered locus">ECP_1007</name>
</gene>
<sequence length="196" mass="21588">MNEAVSPGALSTLFTDARTHNGWREPPVSDETLREIYAQMKWGPTSANCSPARIVFIRTAEGKERLRPALSSGNLQKTLTAPVTAIVAWDSEFYERLPQLFPHGDARSWFTSSPQLAEETAFRNSSMQAAYLIVACRALGLDTGPMSGFDRQYVDDAFFAGSTLKSNLLINIGYGDSSKLFARLPRLSFEEACGLL</sequence>
<name>RUTE_ECOL5</name>
<accession>Q0TJ59</accession>
<proteinExistence type="inferred from homology"/>